<gene>
    <name type="primary">SORBS3</name>
    <name type="synonym">SCAM1</name>
</gene>
<organism>
    <name type="scientific">Homo sapiens</name>
    <name type="common">Human</name>
    <dbReference type="NCBI Taxonomy" id="9606"/>
    <lineage>
        <taxon>Eukaryota</taxon>
        <taxon>Metazoa</taxon>
        <taxon>Chordata</taxon>
        <taxon>Craniata</taxon>
        <taxon>Vertebrata</taxon>
        <taxon>Euteleostomi</taxon>
        <taxon>Mammalia</taxon>
        <taxon>Eutheria</taxon>
        <taxon>Euarchontoglires</taxon>
        <taxon>Primates</taxon>
        <taxon>Haplorrhini</taxon>
        <taxon>Catarrhini</taxon>
        <taxon>Hominidae</taxon>
        <taxon>Homo</taxon>
    </lineage>
</organism>
<keyword id="KW-0002">3D-structure</keyword>
<keyword id="KW-0007">Acetylation</keyword>
<keyword id="KW-0025">Alternative splicing</keyword>
<keyword id="KW-0130">Cell adhesion</keyword>
<keyword id="KW-0965">Cell junction</keyword>
<keyword id="KW-0963">Cytoplasm</keyword>
<keyword id="KW-0206">Cytoskeleton</keyword>
<keyword id="KW-0539">Nucleus</keyword>
<keyword id="KW-0597">Phosphoprotein</keyword>
<keyword id="KW-1267">Proteomics identification</keyword>
<keyword id="KW-1185">Reference proteome</keyword>
<keyword id="KW-0677">Repeat</keyword>
<keyword id="KW-0728">SH3 domain</keyword>
<sequence length="671" mass="75341">MQGPPRSLRAGLSLDDFIPGHLQSHIGSSSRGTRVPVIRNGGSNTLNFQFHDPAPRTVCNGGYTPRRDASQHPDPAWYQTWPGPGSKPSASTKIPASQHTQNWSATWTKDSKRRDKRWVKYEGIGPVDESGMPIAPRSSVDRPRDWYRRMFQQIHRKMPDLQLDWTFEEPPRDPRHLGAQQRPAHRPGPATSSSGRSWDHSEELPRSTFNYRPGAFSTVLQPSNQVLRRREKVDNVWTEESWNQFLQELETGQRPKKPLVDDPGEKPSQPIEVLLERELAELSAELDKDLRAIETRLPSPKSSPAPRRAPEQRPPAGPASAWSSSYPHAPYLGSARSLSPHKMADGGSPFLGRRDFVYPSSTRDPSASNGGGSPARREEKKRKAARLKFDFQAQSPKELTLQKGDIVYIHKEVDKNWLEGEHHGRLGIFPANYVEVLPADEIPKPIKPPTYQVLEYGEAVAQYTFKGDLEVELSFRKGEHICLIRKVNENWYEGRITGTGRQGIFPASYVQVSREPRLRLCDDGPQLPTSPRLTAAARSARHPSSPSALRSPADPIDLGGQTSPRRTGFSFPTQEPRPQTQNLGTPGPALSHSRGPSHPLDLGTSSPNTSQIHWTPYRAMYQYRPQNEDELELREGDRVDVMQQCDDGWFVGVSRRTQKFGTFPGNYVAPV</sequence>
<protein>
    <recommendedName>
        <fullName>Vinexin</fullName>
    </recommendedName>
    <alternativeName>
        <fullName>SH3-containing adapter molecule 1</fullName>
        <shortName>SCAM-1</shortName>
    </alternativeName>
    <alternativeName>
        <fullName>Sorbin and SH3 domain-containing protein 3</fullName>
    </alternativeName>
</protein>
<comment type="function">
    <text>Vinexin alpha isoform promotes up-regulation of actin stress fiber formation. Vinexin beta isoform plays a role in cell spreading and enhances the activation of JNK/SAPK in response to EGF stimulation by using its third SH3 domain.</text>
</comment>
<comment type="subunit">
    <text evidence="1">Interacts with DLG5 through its third SH3 domain (By similarity). Interacts with vinculin by the first two SH3 domains and the proline rich region of vinculin. Binds to SOS (guanine nucleotide exchange factor of RAS and RAC), through its third SH3 domain. The formation of this complex is down-regulated by phosphorylation of SOS. Interacts with INPPL1/SHIP2, SAFB2, SOCS7 and SRCIN1. Interacts with FASLG. Interacts with MAPK1/ERK2 (By similarity).</text>
</comment>
<comment type="interaction">
    <interactant intactId="EBI-741237">
        <id>O60504</id>
    </interactant>
    <interactant intactId="EBI-11096309">
        <id>Q9NYB9-2</id>
        <label>ABI2</label>
    </interactant>
    <organismsDiffer>false</organismsDiffer>
    <experiments>3</experiments>
</comment>
<comment type="interaction">
    <interactant intactId="EBI-741237">
        <id>O60504</id>
    </interactant>
    <interactant intactId="EBI-3922811">
        <id>Q96EY9</id>
        <label>ADAT3</label>
    </interactant>
    <organismsDiffer>false</organismsDiffer>
    <experiments>3</experiments>
</comment>
<comment type="interaction">
    <interactant intactId="EBI-741237">
        <id>O60504</id>
    </interactant>
    <interactant intactId="EBI-8643161">
        <id>Q9NX04</id>
        <label>AIRIM</label>
    </interactant>
    <organismsDiffer>false</organismsDiffer>
    <experiments>3</experiments>
</comment>
<comment type="interaction">
    <interactant intactId="EBI-741237">
        <id>O60504</id>
    </interactant>
    <interactant intactId="EBI-742928">
        <id>Q53H80</id>
        <label>AKIRIN2</label>
    </interactant>
    <organismsDiffer>false</organismsDiffer>
    <experiments>3</experiments>
</comment>
<comment type="interaction">
    <interactant intactId="EBI-741237">
        <id>O60504</id>
    </interactant>
    <interactant intactId="EBI-296058">
        <id>P31751</id>
        <label>AKT2</label>
    </interactant>
    <organismsDiffer>false</organismsDiffer>
    <experiments>3</experiments>
</comment>
<comment type="interaction">
    <interactant intactId="EBI-741237">
        <id>O60504</id>
    </interactant>
    <interactant intactId="EBI-11954519">
        <id>Q49AR9</id>
        <label>ANKS1A</label>
    </interactant>
    <organismsDiffer>false</organismsDiffer>
    <experiments>3</experiments>
</comment>
<comment type="interaction">
    <interactant intactId="EBI-741237">
        <id>O60504</id>
    </interactant>
    <interactant intactId="EBI-745689">
        <id>Q7L5A3</id>
        <label>ATOSB</label>
    </interactant>
    <organismsDiffer>false</organismsDiffer>
    <experiments>3</experiments>
</comment>
<comment type="interaction">
    <interactant intactId="EBI-741237">
        <id>O60504</id>
    </interactant>
    <interactant intactId="EBI-744545">
        <id>Q8NEC5</id>
        <label>CATSPER1</label>
    </interactant>
    <organismsDiffer>false</organismsDiffer>
    <experiments>3</experiments>
</comment>
<comment type="interaction">
    <interactant intactId="EBI-741237">
        <id>O60504</id>
    </interactant>
    <interactant intactId="EBI-11954144">
        <id>O43439-4</id>
        <label>CBFA2T2</label>
    </interactant>
    <organismsDiffer>false</organismsDiffer>
    <experiments>3</experiments>
</comment>
<comment type="interaction">
    <interactant intactId="EBI-741237">
        <id>O60504</id>
    </interactant>
    <interactant intactId="EBI-10171570">
        <id>Q68D86</id>
        <label>CCDC102B</label>
    </interactant>
    <organismsDiffer>false</organismsDiffer>
    <experiments>3</experiments>
</comment>
<comment type="interaction">
    <interactant intactId="EBI-741237">
        <id>O60504</id>
    </interactant>
    <interactant intactId="EBI-744556">
        <id>Q96HB5</id>
        <label>CCDC120</label>
    </interactant>
    <organismsDiffer>false</organismsDiffer>
    <experiments>3</experiments>
</comment>
<comment type="interaction">
    <interactant intactId="EBI-741237">
        <id>O60504</id>
    </interactant>
    <interactant intactId="EBI-10961624">
        <id>Q2TAC2-2</id>
        <label>CCDC57</label>
    </interactant>
    <organismsDiffer>false</organismsDiffer>
    <experiments>3</experiments>
</comment>
<comment type="interaction">
    <interactant intactId="EBI-741237">
        <id>O60504</id>
    </interactant>
    <interactant intactId="EBI-1045350">
        <id>Q16204</id>
        <label>CCDC6</label>
    </interactant>
    <organismsDiffer>false</organismsDiffer>
    <experiments>3</experiments>
</comment>
<comment type="interaction">
    <interactant intactId="EBI-741237">
        <id>O60504</id>
    </interactant>
    <interactant intactId="EBI-10175300">
        <id>Q8TD31-3</id>
        <label>CCHCR1</label>
    </interactant>
    <organismsDiffer>false</organismsDiffer>
    <experiments>3</experiments>
</comment>
<comment type="interaction">
    <interactant intactId="EBI-741237">
        <id>O60504</id>
    </interactant>
    <interactant intactId="EBI-741406">
        <id>P51946</id>
        <label>CCNH</label>
    </interactant>
    <organismsDiffer>false</organismsDiffer>
    <experiments>3</experiments>
</comment>
<comment type="interaction">
    <interactant intactId="EBI-741237">
        <id>O60504</id>
    </interactant>
    <interactant intactId="EBI-2836773">
        <id>Q9UK58</id>
        <label>CCNL1</label>
    </interactant>
    <organismsDiffer>false</organismsDiffer>
    <experiments>3</experiments>
</comment>
<comment type="interaction">
    <interactant intactId="EBI-741237">
        <id>O60504</id>
    </interactant>
    <interactant intactId="EBI-396137">
        <id>Q9UJX2</id>
        <label>CDC23</label>
    </interactant>
    <organismsDiffer>false</organismsDiffer>
    <experiments>3</experiments>
</comment>
<comment type="interaction">
    <interactant intactId="EBI-741237">
        <id>O60504</id>
    </interactant>
    <interactant intactId="EBI-711290">
        <id>P42773</id>
        <label>CDKN2C</label>
    </interactant>
    <organismsDiffer>false</organismsDiffer>
    <experiments>3</experiments>
</comment>
<comment type="interaction">
    <interactant intactId="EBI-741237">
        <id>O60504</id>
    </interactant>
    <interactant intactId="EBI-749051">
        <id>Q8IYR0</id>
        <label>CFAP206</label>
    </interactant>
    <organismsDiffer>false</organismsDiffer>
    <experiments>3</experiments>
</comment>
<comment type="interaction">
    <interactant intactId="EBI-741237">
        <id>O60504</id>
    </interactant>
    <interactant intactId="EBI-2555370">
        <id>Q8IWX8</id>
        <label>CHERP</label>
    </interactant>
    <organismsDiffer>false</organismsDiffer>
    <experiments>3</experiments>
</comment>
<comment type="interaction">
    <interactant intactId="EBI-741237">
        <id>O60504</id>
    </interactant>
    <interactant intactId="EBI-368382">
        <id>Q9H9E3</id>
        <label>COG4</label>
    </interactant>
    <organismsDiffer>false</organismsDiffer>
    <experiments>3</experiments>
</comment>
<comment type="interaction">
    <interactant intactId="EBI-741237">
        <id>O60504</id>
    </interactant>
    <interactant intactId="EBI-1642542">
        <id>Q99829</id>
        <label>CPNE1</label>
    </interactant>
    <organismsDiffer>false</organismsDiffer>
    <experiments>3</experiments>
</comment>
<comment type="interaction">
    <interactant intactId="EBI-741237">
        <id>O60504</id>
    </interactant>
    <interactant intactId="EBI-7097057">
        <id>Q96FN4</id>
        <label>CPNE2</label>
    </interactant>
    <organismsDiffer>false</organismsDiffer>
    <experiments>6</experiments>
</comment>
<comment type="interaction">
    <interactant intactId="EBI-741237">
        <id>O60504</id>
    </interactant>
    <interactant intactId="EBI-1642325">
        <id>Q86YQ8</id>
        <label>CPNE8</label>
    </interactant>
    <organismsDiffer>false</organismsDiffer>
    <experiments>3</experiments>
</comment>
<comment type="interaction">
    <interactant intactId="EBI-741237">
        <id>O60504</id>
    </interactant>
    <interactant intactId="EBI-739773">
        <id>Q9BSW2</id>
        <label>CRACR2A</label>
    </interactant>
    <organismsDiffer>false</organismsDiffer>
    <experiments>3</experiments>
</comment>
<comment type="interaction">
    <interactant intactId="EBI-741237">
        <id>O60504</id>
    </interactant>
    <interactant intactId="EBI-351257">
        <id>P26196</id>
        <label>DDX6</label>
    </interactant>
    <organismsDiffer>false</organismsDiffer>
    <experiments>3</experiments>
</comment>
<comment type="interaction">
    <interactant intactId="EBI-741237">
        <id>O60504</id>
    </interactant>
    <interactant intactId="EBI-10233719">
        <id>Q14689-6</id>
        <label>DIP2A</label>
    </interactant>
    <organismsDiffer>false</organismsDiffer>
    <experiments>3</experiments>
</comment>
<comment type="interaction">
    <interactant intactId="EBI-741237">
        <id>O60504</id>
    </interactant>
    <interactant intactId="EBI-739789">
        <id>Q92997</id>
        <label>DVL3</label>
    </interactant>
    <organismsDiffer>false</organismsDiffer>
    <experiments>3</experiments>
</comment>
<comment type="interaction">
    <interactant intactId="EBI-741237">
        <id>O60504</id>
    </interactant>
    <interactant intactId="EBI-743105">
        <id>Q5JVL4</id>
        <label>EFHC1</label>
    </interactant>
    <organismsDiffer>false</organismsDiffer>
    <experiments>3</experiments>
</comment>
<comment type="interaction">
    <interactant intactId="EBI-741237">
        <id>O60504</id>
    </interactant>
    <interactant intactId="EBI-709735">
        <id>O15372</id>
        <label>EIF3H</label>
    </interactant>
    <organismsDiffer>false</organismsDiffer>
    <experiments>3</experiments>
</comment>
<comment type="interaction">
    <interactant intactId="EBI-741237">
        <id>O60504</id>
    </interactant>
    <interactant intactId="EBI-10184995">
        <id>Q6IB98</id>
        <label>EIF3S3</label>
    </interactant>
    <organismsDiffer>false</organismsDiffer>
    <experiments>3</experiments>
</comment>
<comment type="interaction">
    <interactant intactId="EBI-741237">
        <id>O60504</id>
    </interactant>
    <interactant intactId="EBI-744099">
        <id>Q9H0I2</id>
        <label>ENKD1</label>
    </interactant>
    <organismsDiffer>false</organismsDiffer>
    <experiments>3</experiments>
</comment>
<comment type="interaction">
    <interactant intactId="EBI-741237">
        <id>O60504</id>
    </interactant>
    <interactant intactId="EBI-1644252">
        <id>Q9NYF3</id>
        <label>FAM53C</label>
    </interactant>
    <organismsDiffer>false</organismsDiffer>
    <experiments>3</experiments>
</comment>
<comment type="interaction">
    <interactant intactId="EBI-741237">
        <id>O60504</id>
    </interactant>
    <interactant intactId="EBI-11959077">
        <id>Q6PCT2-2</id>
        <label>FBXL19</label>
    </interactant>
    <organismsDiffer>false</organismsDiffer>
    <experiments>3</experiments>
</comment>
<comment type="interaction">
    <interactant intactId="EBI-741237">
        <id>O60504</id>
    </interactant>
    <interactant intactId="EBI-744935">
        <id>Q9BVV2</id>
        <label>FNDC11</label>
    </interactant>
    <organismsDiffer>false</organismsDiffer>
    <experiments>3</experiments>
</comment>
<comment type="interaction">
    <interactant intactId="EBI-741237">
        <id>O60504</id>
    </interactant>
    <interactant intactId="EBI-1052570">
        <id>O95995</id>
        <label>GAS8</label>
    </interactant>
    <organismsDiffer>false</organismsDiffer>
    <experiments>3</experiments>
</comment>
<comment type="interaction">
    <interactant intactId="EBI-741237">
        <id>O60504</id>
    </interactant>
    <interactant intactId="EBI-744104">
        <id>P55040</id>
        <label>GEM</label>
    </interactant>
    <organismsDiffer>false</organismsDiffer>
    <experiments>3</experiments>
</comment>
<comment type="interaction">
    <interactant intactId="EBI-741237">
        <id>O60504</id>
    </interactant>
    <interactant intactId="EBI-12020340">
        <id>P23415</id>
        <label>GLRA1</label>
    </interactant>
    <organismsDiffer>false</organismsDiffer>
    <experiments>3</experiments>
</comment>
<comment type="interaction">
    <interactant intactId="EBI-741237">
        <id>O60504</id>
    </interactant>
    <interactant intactId="EBI-751540">
        <id>O95872</id>
        <label>GPANK1</label>
    </interactant>
    <organismsDiffer>false</organismsDiffer>
    <experiments>3</experiments>
</comment>
<comment type="interaction">
    <interactant intactId="EBI-741237">
        <id>O60504</id>
    </interactant>
    <interactant intactId="EBI-746309">
        <id>Q92917</id>
        <label>GPKOW</label>
    </interactant>
    <organismsDiffer>false</organismsDiffer>
    <experiments>3</experiments>
</comment>
<comment type="interaction">
    <interactant intactId="EBI-741237">
        <id>O60504</id>
    </interactant>
    <interactant intactId="EBI-740553">
        <id>P13807</id>
        <label>GYS1</label>
    </interactant>
    <organismsDiffer>false</organismsDiffer>
    <experiments>3</experiments>
</comment>
<comment type="interaction">
    <interactant intactId="EBI-741237">
        <id>O60504</id>
    </interactant>
    <interactant intactId="EBI-740220">
        <id>O14964</id>
        <label>HGS</label>
    </interactant>
    <organismsDiffer>false</organismsDiffer>
    <experiments>3</experiments>
</comment>
<comment type="interaction">
    <interactant intactId="EBI-741237">
        <id>O60504</id>
    </interactant>
    <interactant intactId="EBI-352986">
        <id>P52597</id>
        <label>HNRNPF</label>
    </interactant>
    <organismsDiffer>false</organismsDiffer>
    <experiments>3</experiments>
</comment>
<comment type="interaction">
    <interactant intactId="EBI-741237">
        <id>O60504</id>
    </interactant>
    <interactant intactId="EBI-304185">
        <id>P61978</id>
        <label>HNRNPK</label>
    </interactant>
    <organismsDiffer>false</organismsDiffer>
    <experiments>4</experiments>
</comment>
<comment type="interaction">
    <interactant intactId="EBI-741237">
        <id>O60504</id>
    </interactant>
    <interactant intactId="EBI-7060731">
        <id>P61978-2</id>
        <label>HNRNPK</label>
    </interactant>
    <organismsDiffer>false</organismsDiffer>
    <experiments>3</experiments>
</comment>
<comment type="interaction">
    <interactant intactId="EBI-741237">
        <id>O60504</id>
    </interactant>
    <interactant intactId="EBI-1018153">
        <id>Q9BUJ2</id>
        <label>HNRNPUL1</label>
    </interactant>
    <organismsDiffer>false</organismsDiffer>
    <experiments>3</experiments>
</comment>
<comment type="interaction">
    <interactant intactId="EBI-741237">
        <id>O60504</id>
    </interactant>
    <interactant intactId="EBI-747481">
        <id>Q9NV31</id>
        <label>IMP3</label>
    </interactant>
    <organismsDiffer>false</organismsDiffer>
    <experiments>3</experiments>
</comment>
<comment type="interaction">
    <interactant intactId="EBI-741237">
        <id>O60504</id>
    </interactant>
    <interactant intactId="EBI-12081118">
        <id>Q1MX18</id>
        <label>INSC</label>
    </interactant>
    <organismsDiffer>false</organismsDiffer>
    <experiments>3</experiments>
</comment>
<comment type="interaction">
    <interactant intactId="EBI-741237">
        <id>O60504</id>
    </interactant>
    <interactant intactId="EBI-10220600">
        <id>Q8NA54</id>
        <label>IQUB</label>
    </interactant>
    <organismsDiffer>false</organismsDiffer>
    <experiments>3</experiments>
</comment>
<comment type="interaction">
    <interactant intactId="EBI-741237">
        <id>O60504</id>
    </interactant>
    <interactant intactId="EBI-2556193">
        <id>Q63ZY3</id>
        <label>KANK2</label>
    </interactant>
    <organismsDiffer>false</organismsDiffer>
    <experiments>3</experiments>
</comment>
<comment type="interaction">
    <interactant intactId="EBI-741237">
        <id>O60504</id>
    </interactant>
    <interactant intactId="EBI-739493">
        <id>Q6ZU52</id>
        <label>KIAA0408</label>
    </interactant>
    <organismsDiffer>false</organismsDiffer>
    <experiments>4</experiments>
</comment>
<comment type="interaction">
    <interactant intactId="EBI-741237">
        <id>O60504</id>
    </interactant>
    <interactant intactId="EBI-14069005">
        <id>Q9BVG8-5</id>
        <label>KIFC3</label>
    </interactant>
    <organismsDiffer>false</organismsDiffer>
    <experiments>3</experiments>
</comment>
<comment type="interaction">
    <interactant intactId="EBI-741237">
        <id>O60504</id>
    </interactant>
    <interactant intactId="EBI-14086479">
        <id>Q8IVT4</id>
        <label>MGC50722</label>
    </interactant>
    <organismsDiffer>false</organismsDiffer>
    <experiments>3</experiments>
</comment>
<comment type="interaction">
    <interactant intactId="EBI-741237">
        <id>O60504</id>
    </interactant>
    <interactant intactId="EBI-2340269">
        <id>Q13064</id>
        <label>MKRN3</label>
    </interactant>
    <organismsDiffer>false</organismsDiffer>
    <experiments>3</experiments>
</comment>
<comment type="interaction">
    <interactant intactId="EBI-741237">
        <id>O60504</id>
    </interactant>
    <interactant intactId="EBI-7950783">
        <id>Q96JP2</id>
        <label>MYO15B</label>
    </interactant>
    <organismsDiffer>false</organismsDiffer>
    <experiments>3</experiments>
</comment>
<comment type="interaction">
    <interactant intactId="EBI-741237">
        <id>O60504</id>
    </interactant>
    <interactant intactId="EBI-8641936">
        <id>Q15742</id>
        <label>NAB2</label>
    </interactant>
    <organismsDiffer>false</organismsDiffer>
    <experiments>3</experiments>
</comment>
<comment type="interaction">
    <interactant intactId="EBI-741237">
        <id>O60504</id>
    </interactant>
    <interactant intactId="EBI-2515597">
        <id>Q96HR8</id>
        <label>NAF1</label>
    </interactant>
    <organismsDiffer>false</organismsDiffer>
    <experiments>3</experiments>
</comment>
<comment type="interaction">
    <interactant intactId="EBI-741237">
        <id>O60504</id>
    </interactant>
    <interactant intactId="EBI-16429340">
        <id>A0A0S2Z4D7</id>
        <label>NCK1</label>
    </interactant>
    <organismsDiffer>false</organismsDiffer>
    <experiments>3</experiments>
</comment>
<comment type="interaction">
    <interactant intactId="EBI-741237">
        <id>O60504</id>
    </interactant>
    <interactant intactId="EBI-745080">
        <id>Q9NZQ3</id>
        <label>NCKIPSD</label>
    </interactant>
    <organismsDiffer>false</organismsDiffer>
    <experiments>3</experiments>
</comment>
<comment type="interaction">
    <interactant intactId="EBI-741237">
        <id>O60504</id>
    </interactant>
    <interactant intactId="EBI-11750983">
        <id>Q9HC98-4</id>
        <label>NEK6</label>
    </interactant>
    <organismsDiffer>false</organismsDiffer>
    <experiments>3</experiments>
</comment>
<comment type="interaction">
    <interactant intactId="EBI-741237">
        <id>O60504</id>
    </interactant>
    <interactant intactId="EBI-10271199">
        <id>Q8NI38</id>
        <label>NFKBID</label>
    </interactant>
    <organismsDiffer>false</organismsDiffer>
    <experiments>3</experiments>
</comment>
<comment type="interaction">
    <interactant intactId="EBI-741237">
        <id>O60504</id>
    </interactant>
    <interactant intactId="EBI-2859639">
        <id>Q5HYW2</id>
        <label>NHSL2</label>
    </interactant>
    <organismsDiffer>false</organismsDiffer>
    <experiments>3</experiments>
</comment>
<comment type="interaction">
    <interactant intactId="EBI-741237">
        <id>O60504</id>
    </interactant>
    <interactant intactId="EBI-749731">
        <id>Q9UHY1</id>
        <label>NRBP1</label>
    </interactant>
    <organismsDiffer>false</organismsDiffer>
    <experiments>3</experiments>
</comment>
<comment type="interaction">
    <interactant intactId="EBI-741237">
        <id>O60504</id>
    </interactant>
    <interactant intactId="EBI-536879">
        <id>O43482</id>
        <label>OIP5</label>
    </interactant>
    <organismsDiffer>false</organismsDiffer>
    <experiments>3</experiments>
</comment>
<comment type="interaction">
    <interactant intactId="EBI-741237">
        <id>O60504</id>
    </interactant>
    <interactant intactId="EBI-9057006">
        <id>Q9UJX0</id>
        <label>OSGIN1</label>
    </interactant>
    <organismsDiffer>false</organismsDiffer>
    <experiments>3</experiments>
</comment>
<comment type="interaction">
    <interactant intactId="EBI-741237">
        <id>O60504</id>
    </interactant>
    <interactant intactId="EBI-1045887">
        <id>Q13177</id>
        <label>PAK2</label>
    </interactant>
    <organismsDiffer>false</organismsDiffer>
    <experiments>6</experiments>
</comment>
<comment type="interaction">
    <interactant intactId="EBI-741237">
        <id>O60504</id>
    </interactant>
    <interactant intactId="EBI-741896">
        <id>Q9P286</id>
        <label>PAK5</label>
    </interactant>
    <organismsDiffer>false</organismsDiffer>
    <experiments>3</experiments>
</comment>
<comment type="interaction">
    <interactant intactId="EBI-741237">
        <id>O60504</id>
    </interactant>
    <interactant intactId="EBI-14131832">
        <id>Q8N4B1-4</id>
        <label>PHETA1</label>
    </interactant>
    <organismsDiffer>false</organismsDiffer>
    <experiments>3</experiments>
</comment>
<comment type="interaction">
    <interactant intactId="EBI-741237">
        <id>O60504</id>
    </interactant>
    <interactant intactId="EBI-530034">
        <id>O43189</id>
        <label>PHF1</label>
    </interactant>
    <organismsDiffer>false</organismsDiffer>
    <experiments>3</experiments>
</comment>
<comment type="interaction">
    <interactant intactId="EBI-741237">
        <id>O60504</id>
    </interactant>
    <interactant intactId="EBI-14066006">
        <id>Q4G0R1</id>
        <label>PIBF1</label>
    </interactant>
    <organismsDiffer>false</organismsDiffer>
    <experiments>3</experiments>
</comment>
<comment type="interaction">
    <interactant intactId="EBI-741237">
        <id>O60504</id>
    </interactant>
    <interactant intactId="EBI-12014286">
        <id>Q494U1-3</id>
        <label>PLEKHN1</label>
    </interactant>
    <organismsDiffer>false</organismsDiffer>
    <experiments>3</experiments>
</comment>
<comment type="interaction">
    <interactant intactId="EBI-741237">
        <id>O60504</id>
    </interactant>
    <interactant intactId="EBI-741582">
        <id>O60568</id>
        <label>PLOD3</label>
    </interactant>
    <organismsDiffer>false</organismsDiffer>
    <experiments>3</experiments>
</comment>
<comment type="interaction">
    <interactant intactId="EBI-741237">
        <id>O60504</id>
    </interactant>
    <interactant intactId="EBI-10171633">
        <id>Q96PV4</id>
        <label>PNMA5</label>
    </interactant>
    <organismsDiffer>false</organismsDiffer>
    <experiments>3</experiments>
</comment>
<comment type="interaction">
    <interactant intactId="EBI-741237">
        <id>O60504</id>
    </interactant>
    <interactant intactId="EBI-713847">
        <id>P56282</id>
        <label>POLE2</label>
    </interactant>
    <organismsDiffer>false</organismsDiffer>
    <experiments>3</experiments>
</comment>
<comment type="interaction">
    <interactant intactId="EBI-741237">
        <id>O60504</id>
    </interactant>
    <interactant intactId="EBI-1055079">
        <id>O15160</id>
        <label>POLR1C</label>
    </interactant>
    <organismsDiffer>false</organismsDiffer>
    <experiments>3</experiments>
</comment>
<comment type="interaction">
    <interactant intactId="EBI-741237">
        <id>O60504</id>
    </interactant>
    <interactant intactId="EBI-1763225">
        <id>O75145</id>
        <label>PPFIA3</label>
    </interactant>
    <organismsDiffer>false</organismsDiffer>
    <experiments>3</experiments>
</comment>
<comment type="interaction">
    <interactant intactId="EBI-741237">
        <id>O60504</id>
    </interactant>
    <interactant intactId="EBI-12226639">
        <id>Q8IXY8</id>
        <label>PPIL6</label>
    </interactant>
    <organismsDiffer>false</organismsDiffer>
    <experiments>3</experiments>
</comment>
<comment type="interaction">
    <interactant intactId="EBI-741237">
        <id>O60504</id>
    </interactant>
    <interactant intactId="EBI-2557469">
        <id>Q6NYC8</id>
        <label>PPP1R18</label>
    </interactant>
    <organismsDiffer>false</organismsDiffer>
    <experiments>3</experiments>
</comment>
<comment type="interaction">
    <interactant intactId="EBI-741237">
        <id>O60504</id>
    </interactant>
    <interactant intactId="EBI-347462">
        <id>P47897</id>
        <label>QARS1</label>
    </interactant>
    <organismsDiffer>false</organismsDiffer>
    <experiments>3</experiments>
</comment>
<comment type="interaction">
    <interactant intactId="EBI-741237">
        <id>O60504</id>
    </interactant>
    <interactant intactId="EBI-1055693">
        <id>O75771</id>
        <label>RAD51D</label>
    </interactant>
    <organismsDiffer>false</organismsDiffer>
    <experiments>3</experiments>
</comment>
<comment type="interaction">
    <interactant intactId="EBI-741237">
        <id>O60504</id>
    </interactant>
    <interactant intactId="EBI-366017">
        <id>Q13671</id>
        <label>RIN1</label>
    </interactant>
    <organismsDiffer>false</organismsDiffer>
    <experiments>3</experiments>
</comment>
<comment type="interaction">
    <interactant intactId="EBI-741237">
        <id>O60504</id>
    </interactant>
    <interactant intactId="EBI-1378139">
        <id>Q9HAT0</id>
        <label>ROPN1</label>
    </interactant>
    <organismsDiffer>false</organismsDiffer>
    <experiments>3</experiments>
</comment>
<comment type="interaction">
    <interactant intactId="EBI-741237">
        <id>O60504</id>
    </interactant>
    <interactant intactId="EBI-446694">
        <id>Q9BST9</id>
        <label>RTKN</label>
    </interactant>
    <organismsDiffer>false</organismsDiffer>
    <experiments>3</experiments>
</comment>
<comment type="interaction">
    <interactant intactId="EBI-741237">
        <id>O60504</id>
    </interactant>
    <interactant intactId="EBI-11984663">
        <id>Q06455-2</id>
        <label>RUNX1T1</label>
    </interactant>
    <organismsDiffer>false</organismsDiffer>
    <experiments>3</experiments>
</comment>
<comment type="interaction">
    <interactant intactId="EBI-741237">
        <id>O60504</id>
    </interactant>
    <interactant intactId="EBI-3957636">
        <id>Q8IYX7</id>
        <label>SAXO1</label>
    </interactant>
    <organismsDiffer>false</organismsDiffer>
    <experiments>3</experiments>
</comment>
<comment type="interaction">
    <interactant intactId="EBI-741237">
        <id>O60504</id>
    </interactant>
    <interactant intactId="EBI-748391">
        <id>Q9BWG6</id>
        <label>SCNM1</label>
    </interactant>
    <organismsDiffer>false</organismsDiffer>
    <experiments>3</experiments>
</comment>
<comment type="interaction">
    <interactant intactId="EBI-741237">
        <id>O60504</id>
    </interactant>
    <interactant intactId="EBI-12233047">
        <id>Q9C0A6-3</id>
        <label>SETD5</label>
    </interactant>
    <organismsDiffer>false</organismsDiffer>
    <experiments>3</experiments>
</comment>
<comment type="interaction">
    <interactant intactId="EBI-741237">
        <id>O60504</id>
    </interactant>
    <interactant intactId="EBI-747035">
        <id>Q9H788</id>
        <label>SH2D4A</label>
    </interactant>
    <organismsDiffer>false</organismsDiffer>
    <experiments>6</experiments>
</comment>
<comment type="interaction">
    <interactant intactId="EBI-741237">
        <id>O60504</id>
    </interactant>
    <interactant intactId="EBI-10308083">
        <id>Q9H788-2</id>
        <label>SH2D4A</label>
    </interactant>
    <organismsDiffer>false</organismsDiffer>
    <experiments>3</experiments>
</comment>
<comment type="interaction">
    <interactant intactId="EBI-741237">
        <id>O60504</id>
    </interactant>
    <interactant intactId="EBI-1539606">
        <id>O14512</id>
        <label>SOCS7</label>
    </interactant>
    <organismsDiffer>false</organismsDiffer>
    <experiments>3</experiments>
</comment>
<comment type="interaction">
    <interactant intactId="EBI-741237">
        <id>O60504</id>
    </interactant>
    <interactant intactId="EBI-742688">
        <id>Q9NZD8</id>
        <label>SPG21</label>
    </interactant>
    <organismsDiffer>false</organismsDiffer>
    <experiments>3</experiments>
</comment>
<comment type="interaction">
    <interactant intactId="EBI-741237">
        <id>O60504</id>
    </interactant>
    <interactant intactId="EBI-12082116">
        <id>Q9H987-2</id>
        <label>SYNPO2L</label>
    </interactant>
    <organismsDiffer>false</organismsDiffer>
    <experiments>3</experiments>
</comment>
<comment type="interaction">
    <interactant intactId="EBI-741237">
        <id>O60504</id>
    </interactant>
    <interactant intactId="EBI-8787464">
        <id>Q9NU19</id>
        <label>TBC1D22B</label>
    </interactant>
    <organismsDiffer>false</organismsDiffer>
    <experiments>4</experiments>
</comment>
<comment type="interaction">
    <interactant intactId="EBI-741237">
        <id>O60504</id>
    </interactant>
    <interactant intactId="EBI-11955057">
        <id>Q8N8B7-2</id>
        <label>TCEANC</label>
    </interactant>
    <organismsDiffer>false</organismsDiffer>
    <experiments>3</experiments>
</comment>
<comment type="interaction">
    <interactant intactId="EBI-741237">
        <id>O60504</id>
    </interactant>
    <interactant intactId="EBI-747736">
        <id>Q15561</id>
        <label>TEAD4</label>
    </interactant>
    <organismsDiffer>false</organismsDiffer>
    <experiments>3</experiments>
</comment>
<comment type="interaction">
    <interactant intactId="EBI-741237">
        <id>O60504</id>
    </interactant>
    <interactant intactId="EBI-11139477">
        <id>Q96N21</id>
        <label>TEPSIN</label>
    </interactant>
    <organismsDiffer>false</organismsDiffer>
    <experiments>3</experiments>
</comment>
<comment type="interaction">
    <interactant intactId="EBI-741237">
        <id>O60504</id>
    </interactant>
    <interactant intactId="EBI-949753">
        <id>Q63HR2</id>
        <label>TNS2</label>
    </interactant>
    <organismsDiffer>false</organismsDiffer>
    <experiments>3</experiments>
</comment>
<comment type="interaction">
    <interactant intactId="EBI-741237">
        <id>O60504</id>
    </interactant>
    <interactant intactId="EBI-740098">
        <id>P36406</id>
        <label>TRIM23</label>
    </interactant>
    <organismsDiffer>false</organismsDiffer>
    <experiments>6</experiments>
</comment>
<comment type="interaction">
    <interactant intactId="EBI-741237">
        <id>O60504</id>
    </interactant>
    <interactant intactId="EBI-719493">
        <id>P14373</id>
        <label>TRIM27</label>
    </interactant>
    <organismsDiffer>false</organismsDiffer>
    <experiments>3</experiments>
</comment>
<comment type="interaction">
    <interactant intactId="EBI-741237">
        <id>O60504</id>
    </interactant>
    <interactant intactId="EBI-725997">
        <id>Q8WV44</id>
        <label>TRIM41</label>
    </interactant>
    <organismsDiffer>false</organismsDiffer>
    <experiments>3</experiments>
</comment>
<comment type="interaction">
    <interactant intactId="EBI-741237">
        <id>O60504</id>
    </interactant>
    <interactant intactId="EBI-744794">
        <id>Q9BZW7</id>
        <label>TSGA10</label>
    </interactant>
    <organismsDiffer>false</organismsDiffer>
    <experiments>3</experiments>
</comment>
<comment type="interaction">
    <interactant intactId="EBI-741237">
        <id>O60504</id>
    </interactant>
    <interactant intactId="EBI-10241197">
        <id>Q3SY00</id>
        <label>TSGA10IP</label>
    </interactant>
    <organismsDiffer>false</organismsDiffer>
    <experiments>3</experiments>
</comment>
<comment type="interaction">
    <interactant intactId="EBI-741237">
        <id>O60504</id>
    </interactant>
    <interactant intactId="EBI-359793">
        <id>P40222</id>
        <label>TXLNA</label>
    </interactant>
    <organismsDiffer>false</organismsDiffer>
    <experiments>3</experiments>
</comment>
<comment type="interaction">
    <interactant intactId="EBI-741237">
        <id>O60504</id>
    </interactant>
    <interactant intactId="EBI-743272">
        <id>O75604</id>
        <label>USP2</label>
    </interactant>
    <organismsDiffer>false</organismsDiffer>
    <experiments>3</experiments>
</comment>
<comment type="interaction">
    <interactant intactId="EBI-741237">
        <id>O60504</id>
    </interactant>
    <interactant intactId="EBI-2116622">
        <id>Q5ST30</id>
        <label>VARS2</label>
    </interactant>
    <organismsDiffer>false</organismsDiffer>
    <experiments>3</experiments>
</comment>
<comment type="interaction">
    <interactant intactId="EBI-741237">
        <id>O60504</id>
    </interactant>
    <interactant intactId="EBI-10244997">
        <id>Q5ST30-4</id>
        <label>VARS2</label>
    </interactant>
    <organismsDiffer>false</organismsDiffer>
    <experiments>3</experiments>
</comment>
<comment type="interaction">
    <interactant intactId="EBI-741237">
        <id>O60504</id>
    </interactant>
    <interactant intactId="EBI-11027067">
        <id>P18206-2</id>
        <label>VCL</label>
    </interactant>
    <organismsDiffer>false</organismsDiffer>
    <experiments>3</experiments>
</comment>
<comment type="interaction">
    <interactant intactId="EBI-741237">
        <id>O60504</id>
    </interactant>
    <interactant intactId="EBI-4400866">
        <id>Q9H9H4</id>
        <label>VPS37B</label>
    </interactant>
    <organismsDiffer>false</organismsDiffer>
    <experiments>3</experiments>
</comment>
<comment type="interaction">
    <interactant intactId="EBI-741237">
        <id>O60504</id>
    </interactant>
    <interactant intactId="EBI-2559305">
        <id>A5D8V6</id>
        <label>VPS37C</label>
    </interactant>
    <organismsDiffer>false</organismsDiffer>
    <experiments>6</experiments>
</comment>
<comment type="interaction">
    <interactant intactId="EBI-741237">
        <id>O60504</id>
    </interactant>
    <interactant intactId="EBI-2850112">
        <id>Q8TF74</id>
        <label>WIPF2</label>
    </interactant>
    <organismsDiffer>false</organismsDiffer>
    <experiments>3</experiments>
</comment>
<comment type="interaction">
    <interactant intactId="EBI-741237">
        <id>O60504</id>
    </interactant>
    <interactant intactId="EBI-740434">
        <id>O15156</id>
        <label>ZBTB7B</label>
    </interactant>
    <organismsDiffer>false</organismsDiffer>
    <experiments>3</experiments>
</comment>
<comment type="interaction">
    <interactant intactId="EBI-741237">
        <id>O60504</id>
    </interactant>
    <interactant intactId="EBI-14104088">
        <id>Q53FD0-2</id>
        <label>ZC2HC1C</label>
    </interactant>
    <organismsDiffer>false</organismsDiffer>
    <experiments>3</experiments>
</comment>
<comment type="interaction">
    <interactant intactId="EBI-741237">
        <id>O60504</id>
    </interactant>
    <interactant intactId="EBI-747993">
        <id>Q9NQZ6</id>
        <label>ZC4H2</label>
    </interactant>
    <organismsDiffer>false</organismsDiffer>
    <experiments>3</experiments>
</comment>
<comment type="interaction">
    <interactant intactId="EBI-741237">
        <id>O60504</id>
    </interactant>
    <interactant intactId="EBI-744257">
        <id>Q96IQ9</id>
        <label>ZNF414</label>
    </interactant>
    <organismsDiffer>false</organismsDiffer>
    <experiments>3</experiments>
</comment>
<comment type="interaction">
    <interactant intactId="EBI-1222953">
        <id>O60504-1</id>
    </interactant>
    <interactant intactId="EBI-1384248">
        <id>O15357</id>
        <label>INPPL1</label>
    </interactant>
    <organismsDiffer>false</organismsDiffer>
    <experiments>2</experiments>
</comment>
<comment type="interaction">
    <interactant intactId="EBI-1222956">
        <id>O60504-2</id>
    </interactant>
    <interactant intactId="EBI-375543">
        <id>P00519</id>
        <label>ABL1</label>
    </interactant>
    <organismsDiffer>false</organismsDiffer>
    <experiments>5</experiments>
</comment>
<comment type="interaction">
    <interactant intactId="EBI-1222956">
        <id>O60504-2</id>
    </interactant>
    <interactant intactId="EBI-2568901">
        <id>P13631</id>
        <label>RARG</label>
    </interactant>
    <organismsDiffer>false</organismsDiffer>
    <experiments>2</experiments>
</comment>
<comment type="interaction">
    <interactant intactId="EBI-1222956">
        <id>O60504-2</id>
    </interactant>
    <interactant intactId="EBI-446694">
        <id>Q9BST9</id>
        <label>RTKN</label>
    </interactant>
    <organismsDiffer>false</organismsDiffer>
    <experiments>3</experiments>
</comment>
<comment type="interaction">
    <interactant intactId="EBI-1222956">
        <id>O60504-2</id>
    </interactant>
    <interactant intactId="EBI-352869">
        <id>Q14151</id>
        <label>SAFB2</label>
    </interactant>
    <organismsDiffer>false</organismsDiffer>
    <experiments>3</experiments>
</comment>
<comment type="interaction">
    <interactant intactId="EBI-1222956">
        <id>O60504-2</id>
    </interactant>
    <interactant intactId="EBI-4290615">
        <id>Q9Y6W5</id>
        <label>WASF2</label>
    </interactant>
    <organismsDiffer>false</organismsDiffer>
    <experiments>3</experiments>
</comment>
<comment type="interaction">
    <interactant intactId="EBI-1222956">
        <id>O60504-2</id>
    </interactant>
    <interactant intactId="EBI-957615">
        <id>O00401</id>
        <label>WASL</label>
    </interactant>
    <organismsDiffer>false</organismsDiffer>
    <experiments>3</experiments>
</comment>
<comment type="interaction">
    <interactant intactId="EBI-1222956">
        <id>O60504-2</id>
    </interactant>
    <interactant intactId="EBI-775607">
        <id>Q9QWI6-2</id>
        <label>Srcin1</label>
    </interactant>
    <organismsDiffer>true</organismsDiffer>
    <experiments>4</experiments>
</comment>
<comment type="subcellular location">
    <molecule>Isoform Alpha</molecule>
    <subcellularLocation>
        <location evidence="1">Cell junction</location>
    </subcellularLocation>
    <subcellularLocation>
        <location evidence="1">Cytoplasm</location>
        <location evidence="1">Cytoskeleton</location>
    </subcellularLocation>
    <text evidence="1">Localized at cell-extracellular matrix junctions (By similarity). Both isoforms were localized at focal adhesion and cell-cell adhesion sites.</text>
</comment>
<comment type="subcellular location">
    <molecule>Isoform Beta</molecule>
    <subcellularLocation>
        <location evidence="1">Cell junction</location>
    </subcellularLocation>
    <subcellularLocation>
        <location>Nucleus</location>
    </subcellularLocation>
    <subcellularLocation>
        <location evidence="1">Cytoplasm</location>
        <location evidence="1">Cytoskeleton</location>
    </subcellularLocation>
    <text evidence="1">Localized at cell-extracellular matrix junctions (By similarity). Both isoforms were localized at focal adhesion and cell-cell adhesion sites, vinexin beta was also found in the nucleus.</text>
</comment>
<comment type="alternative products">
    <event type="alternative splicing"/>
    <isoform>
        <id>O60504-1</id>
        <name>Alpha</name>
        <sequence type="displayed"/>
    </isoform>
    <isoform>
        <id>O60504-2</id>
        <name>Beta</name>
        <sequence type="described" ref="VSP_004489"/>
    </isoform>
</comment>
<comment type="tissue specificity">
    <text>Both isoforms are expressed in different tissues like heart, placenta, brain, skeletal muscle and pancreas. Isoform beta is especially found in liver.</text>
</comment>
<comment type="PTM">
    <text evidence="1">Phosphorylated at Ser-530 by MAPK1/ERK2 during cell spreading.</text>
</comment>
<reference key="1">
    <citation type="journal article" date="1999" name="J. Cell Biol.">
        <title>Vinexin: a novel vinculin-binding protein with multiple SH3 domains enhances actin cytoskeletal organization.</title>
        <authorList>
            <person name="Kioka N."/>
            <person name="Sakata S."/>
            <person name="Kawauchi T."/>
            <person name="Amachi T."/>
            <person name="Akiyama S.K."/>
            <person name="Okazaki K."/>
            <person name="Yaen C."/>
            <person name="Yamada K.M."/>
            <person name="Aota S."/>
        </authorList>
    </citation>
    <scope>NUCLEOTIDE SEQUENCE [MRNA] (ISOFORM BETA)</scope>
    <scope>ALTERNATIVE SPLICING</scope>
    <scope>MUTAGENESIS</scope>
    <scope>VARIANT THR-556</scope>
    <source>
        <tissue>Placenta</tissue>
    </source>
</reference>
<reference key="2">
    <citation type="submission" date="1997-12" db="EMBL/GenBank/DDBJ databases">
        <authorList>
            <person name="Her J.-H."/>
            <person name="Gorman D."/>
            <person name="Miyajima A."/>
            <person name="Bolen J.B."/>
        </authorList>
    </citation>
    <scope>NUCLEOTIDE SEQUENCE [MRNA] (ISOFORM ALPHA)</scope>
    <scope>VARIANT THR-556</scope>
</reference>
<reference key="3">
    <citation type="journal article" date="2006" name="Nature">
        <title>DNA sequence and analysis of human chromosome 8.</title>
        <authorList>
            <person name="Nusbaum C."/>
            <person name="Mikkelsen T.S."/>
            <person name="Zody M.C."/>
            <person name="Asakawa S."/>
            <person name="Taudien S."/>
            <person name="Garber M."/>
            <person name="Kodira C.D."/>
            <person name="Schueler M.G."/>
            <person name="Shimizu A."/>
            <person name="Whittaker C.A."/>
            <person name="Chang J.L."/>
            <person name="Cuomo C.A."/>
            <person name="Dewar K."/>
            <person name="FitzGerald M.G."/>
            <person name="Yang X."/>
            <person name="Allen N.R."/>
            <person name="Anderson S."/>
            <person name="Asakawa T."/>
            <person name="Blechschmidt K."/>
            <person name="Bloom T."/>
            <person name="Borowsky M.L."/>
            <person name="Butler J."/>
            <person name="Cook A."/>
            <person name="Corum B."/>
            <person name="DeArellano K."/>
            <person name="DeCaprio D."/>
            <person name="Dooley K.T."/>
            <person name="Dorris L. III"/>
            <person name="Engels R."/>
            <person name="Gloeckner G."/>
            <person name="Hafez N."/>
            <person name="Hagopian D.S."/>
            <person name="Hall J.L."/>
            <person name="Ishikawa S.K."/>
            <person name="Jaffe D.B."/>
            <person name="Kamat A."/>
            <person name="Kudoh J."/>
            <person name="Lehmann R."/>
            <person name="Lokitsang T."/>
            <person name="Macdonald P."/>
            <person name="Major J.E."/>
            <person name="Matthews C.D."/>
            <person name="Mauceli E."/>
            <person name="Menzel U."/>
            <person name="Mihalev A.H."/>
            <person name="Minoshima S."/>
            <person name="Murayama Y."/>
            <person name="Naylor J.W."/>
            <person name="Nicol R."/>
            <person name="Nguyen C."/>
            <person name="O'Leary S.B."/>
            <person name="O'Neill K."/>
            <person name="Parker S.C.J."/>
            <person name="Polley A."/>
            <person name="Raymond C.K."/>
            <person name="Reichwald K."/>
            <person name="Rodriguez J."/>
            <person name="Sasaki T."/>
            <person name="Schilhabel M."/>
            <person name="Siddiqui R."/>
            <person name="Smith C.L."/>
            <person name="Sneddon T.P."/>
            <person name="Talamas J.A."/>
            <person name="Tenzin P."/>
            <person name="Topham K."/>
            <person name="Venkataraman V."/>
            <person name="Wen G."/>
            <person name="Yamazaki S."/>
            <person name="Young S.K."/>
            <person name="Zeng Q."/>
            <person name="Zimmer A.R."/>
            <person name="Rosenthal A."/>
            <person name="Birren B.W."/>
            <person name="Platzer M."/>
            <person name="Shimizu N."/>
            <person name="Lander E.S."/>
        </authorList>
    </citation>
    <scope>NUCLEOTIDE SEQUENCE [LARGE SCALE GENOMIC DNA]</scope>
    <scope>VARIANT THR-556</scope>
</reference>
<reference key="4">
    <citation type="submission" date="2005-09" db="EMBL/GenBank/DDBJ databases">
        <authorList>
            <person name="Mural R.J."/>
            <person name="Istrail S."/>
            <person name="Sutton G.G."/>
            <person name="Florea L."/>
            <person name="Halpern A.L."/>
            <person name="Mobarry C.M."/>
            <person name="Lippert R."/>
            <person name="Walenz B."/>
            <person name="Shatkay H."/>
            <person name="Dew I."/>
            <person name="Miller J.R."/>
            <person name="Flanigan M.J."/>
            <person name="Edwards N.J."/>
            <person name="Bolanos R."/>
            <person name="Fasulo D."/>
            <person name="Halldorsson B.V."/>
            <person name="Hannenhalli S."/>
            <person name="Turner R."/>
            <person name="Yooseph S."/>
            <person name="Lu F."/>
            <person name="Nusskern D.R."/>
            <person name="Shue B.C."/>
            <person name="Zheng X.H."/>
            <person name="Zhong F."/>
            <person name="Delcher A.L."/>
            <person name="Huson D.H."/>
            <person name="Kravitz S.A."/>
            <person name="Mouchard L."/>
            <person name="Reinert K."/>
            <person name="Remington K.A."/>
            <person name="Clark A.G."/>
            <person name="Waterman M.S."/>
            <person name="Eichler E.E."/>
            <person name="Adams M.D."/>
            <person name="Hunkapiller M.W."/>
            <person name="Myers E.W."/>
            <person name="Venter J.C."/>
        </authorList>
    </citation>
    <scope>NUCLEOTIDE SEQUENCE [LARGE SCALE GENOMIC DNA]</scope>
</reference>
<reference key="5">
    <citation type="journal article" date="2004" name="Genome Res.">
        <title>The status, quality, and expansion of the NIH full-length cDNA project: the Mammalian Gene Collection (MGC).</title>
        <authorList>
            <consortium name="The MGC Project Team"/>
        </authorList>
    </citation>
    <scope>NUCLEOTIDE SEQUENCE [LARGE SCALE MRNA] (ISOFORMS ALPHA AND BETA)</scope>
    <scope>VARIANT THR-556</scope>
    <source>
        <tissue>PNS</tissue>
        <tissue>Uterus</tissue>
    </source>
</reference>
<reference key="6">
    <citation type="journal article" date="1999" name="J. Biol. Chem.">
        <title>Vinexin forms a signaling complex with Sos and modulates epidermal growth factor-induced c-Jun N-terminal kinase/stress-activated protein kinase activities.</title>
        <authorList>
            <person name="Akamatsu M."/>
            <person name="Aota S."/>
            <person name="Suwa A."/>
            <person name="Ueda K."/>
            <person name="Amachi T."/>
            <person name="Yamada K.M."/>
            <person name="Akiyama S.K."/>
            <person name="Kioka N."/>
        </authorList>
    </citation>
    <scope>INTERACTION WITH SOS</scope>
</reference>
<reference key="7">
    <citation type="journal article" date="2003" name="J. Biol. Chem.">
        <title>SAFB2, a new scaffold attachment factor homolog and estrogen receptor corepressor.</title>
        <authorList>
            <person name="Townson S.M."/>
            <person name="Dobrzycka K.M."/>
            <person name="Lee A.V."/>
            <person name="Air M."/>
            <person name="Deng W."/>
            <person name="Kang K."/>
            <person name="Jiang S."/>
            <person name="Kioka N."/>
            <person name="Michaelis K."/>
            <person name="Oesterreich S."/>
        </authorList>
    </citation>
    <scope>INTERACTION WITH SAFB2</scope>
</reference>
<reference key="8">
    <citation type="journal article" date="2004" name="Exp. Cell Res.">
        <title>The suppressor of cytokine signaling (SOCS)-7 interacts with the actin cytoskeleton through vinexin.</title>
        <authorList>
            <person name="Martens N."/>
            <person name="Wery M."/>
            <person name="Wang P."/>
            <person name="Braet F."/>
            <person name="Gertler A."/>
            <person name="Hooghe R."/>
            <person name="Vandenhaute J."/>
            <person name="Hooghe-Peters E.L."/>
        </authorList>
    </citation>
    <scope>INTERACTION WITH SOCS7</scope>
</reference>
<reference key="9">
    <citation type="journal article" date="2005" name="FEBS J.">
        <title>SHIP2 interaction with the cytoskeletal protein Vinexin.</title>
        <authorList>
            <person name="Paternotte N."/>
            <person name="Zhang J."/>
            <person name="Vandenbroere I."/>
            <person name="Backers K."/>
            <person name="Blero D."/>
            <person name="Kioka N."/>
            <person name="Vanderwinden J.-M."/>
            <person name="Pirson I."/>
            <person name="Erneux C."/>
        </authorList>
    </citation>
    <scope>INTERACTION WITH INPPL1</scope>
</reference>
<reference key="10">
    <citation type="journal article" date="2006" name="Cell">
        <title>Global, in vivo, and site-specific phosphorylation dynamics in signaling networks.</title>
        <authorList>
            <person name="Olsen J.V."/>
            <person name="Blagoev B."/>
            <person name="Gnad F."/>
            <person name="Macek B."/>
            <person name="Kumar C."/>
            <person name="Mortensen P."/>
            <person name="Mann M."/>
        </authorList>
    </citation>
    <scope>IDENTIFICATION BY MASS SPECTROMETRY [LARGE SCALE ANALYSIS]</scope>
    <source>
        <tissue>Cervix carcinoma</tissue>
    </source>
</reference>
<reference key="11">
    <citation type="journal article" date="2006" name="Nat. Biotechnol.">
        <title>A probability-based approach for high-throughput protein phosphorylation analysis and site localization.</title>
        <authorList>
            <person name="Beausoleil S.A."/>
            <person name="Villen J."/>
            <person name="Gerber S.A."/>
            <person name="Rush J."/>
            <person name="Gygi S.P."/>
        </authorList>
    </citation>
    <scope>PHOSPHORYLATION [LARGE SCALE ANALYSIS] AT SER-530</scope>
    <scope>IDENTIFICATION BY MASS SPECTROMETRY [LARGE SCALE ANALYSIS]</scope>
    <source>
        <tissue>Cervix carcinoma</tissue>
    </source>
</reference>
<reference key="12">
    <citation type="journal article" date="2008" name="J. Neurochem.">
        <title>Characterization of a multidomain adaptor protein, p140Cap, as part of a pre-synaptic complex.</title>
        <authorList>
            <person name="Ito H."/>
            <person name="Atsuzawa K."/>
            <person name="Sudo K."/>
            <person name="Di Stefano P."/>
            <person name="Iwamoto I."/>
            <person name="Morishita R."/>
            <person name="Takei S."/>
            <person name="Semba R."/>
            <person name="Defilippi P."/>
            <person name="Asano T."/>
            <person name="Usuda N."/>
            <person name="Nagata K."/>
        </authorList>
    </citation>
    <scope>INTERACTION WITH SRCIN1</scope>
</reference>
<reference key="13">
    <citation type="journal article" date="2008" name="Proc. Natl. Acad. Sci. U.S.A.">
        <title>A quantitative atlas of mitotic phosphorylation.</title>
        <authorList>
            <person name="Dephoure N."/>
            <person name="Zhou C."/>
            <person name="Villen J."/>
            <person name="Beausoleil S.A."/>
            <person name="Bakalarski C.E."/>
            <person name="Elledge S.J."/>
            <person name="Gygi S.P."/>
        </authorList>
    </citation>
    <scope>PHOSPHORYLATION [LARGE SCALE ANALYSIS] AT SER-530; SER-551 AND SER-563</scope>
    <scope>VARIANT [LARGE SCALE ANALYSIS] THR-556</scope>
    <scope>IDENTIFICATION BY MASS SPECTROMETRY [LARGE SCALE ANALYSIS]</scope>
    <source>
        <tissue>Cervix carcinoma</tissue>
    </source>
</reference>
<reference key="14">
    <citation type="journal article" date="2009" name="BMC Immunol.">
        <title>Identification of SH3 domain interaction partners of human FasL (CD178) by phage display screening.</title>
        <authorList>
            <person name="Voss M."/>
            <person name="Lettau M."/>
            <person name="Janssen O."/>
        </authorList>
    </citation>
    <scope>INTERACTION WITH FASLG</scope>
</reference>
<reference key="15">
    <citation type="journal article" date="2009" name="Mol. Cell. Proteomics">
        <title>Large-scale proteomics analysis of the human kinome.</title>
        <authorList>
            <person name="Oppermann F.S."/>
            <person name="Gnad F."/>
            <person name="Olsen J.V."/>
            <person name="Hornberger R."/>
            <person name="Greff Z."/>
            <person name="Keri G."/>
            <person name="Mann M."/>
            <person name="Daub H."/>
        </authorList>
    </citation>
    <scope>ACETYLATION [LARGE SCALE ANALYSIS] AT ALA-2 (ISOFORM BETA)</scope>
    <scope>PHOSPHORYLATION [LARGE SCALE ANALYSIS] AT SER-6 (ISOFORM BETA)</scope>
    <scope>VARIANT [LARGE SCALE ANALYSIS] THR-556</scope>
    <scope>CLEAVAGE OF INITIATOR METHIONINE [LARGE SCALE ANALYSIS] (ISOFORM BETA)</scope>
    <scope>IDENTIFICATION BY MASS SPECTROMETRY [LARGE SCALE ANALYSIS]</scope>
</reference>
<reference key="16">
    <citation type="journal article" date="2009" name="Sci. Signal.">
        <title>Quantitative phosphoproteomic analysis of T cell receptor signaling reveals system-wide modulation of protein-protein interactions.</title>
        <authorList>
            <person name="Mayya V."/>
            <person name="Lundgren D.H."/>
            <person name="Hwang S.-I."/>
            <person name="Rezaul K."/>
            <person name="Wu L."/>
            <person name="Eng J.K."/>
            <person name="Rodionov V."/>
            <person name="Han D.K."/>
        </authorList>
    </citation>
    <scope>PHOSPHORYLATION [LARGE SCALE ANALYSIS] AT SER-530 AND SER-563</scope>
    <scope>VARIANT [LARGE SCALE ANALYSIS] THR-556</scope>
    <scope>IDENTIFICATION BY MASS SPECTROMETRY [LARGE SCALE ANALYSIS]</scope>
    <source>
        <tissue>Leukemic T-cell</tissue>
    </source>
</reference>
<reference key="17">
    <citation type="journal article" date="2010" name="Sci. Signal.">
        <title>Quantitative phosphoproteomics reveals widespread full phosphorylation site occupancy during mitosis.</title>
        <authorList>
            <person name="Olsen J.V."/>
            <person name="Vermeulen M."/>
            <person name="Santamaria A."/>
            <person name="Kumar C."/>
            <person name="Miller M.L."/>
            <person name="Jensen L.J."/>
            <person name="Gnad F."/>
            <person name="Cox J."/>
            <person name="Jensen T.S."/>
            <person name="Nigg E.A."/>
            <person name="Brunak S."/>
            <person name="Mann M."/>
        </authorList>
    </citation>
    <scope>ACETYLATION [LARGE SCALE ANALYSIS] AT ALA-2 (ISOFORM BETA)</scope>
    <scope>PHOSPHORYLATION [LARGE SCALE ANALYSIS] AT SER-395; SER-530; SER-545; SER-551 AND SER-563</scope>
    <scope>PHOSPHORYLATION [LARGE SCALE ANALYSIS] AT SER-6 (ISOFORM BETA)</scope>
    <scope>VARIANT [LARGE SCALE ANALYSIS] THR-556</scope>
    <scope>CLEAVAGE OF INITIATOR METHIONINE [LARGE SCALE ANALYSIS] (ISOFORM BETA)</scope>
    <scope>IDENTIFICATION BY MASS SPECTROMETRY [LARGE SCALE ANALYSIS]</scope>
    <source>
        <tissue>Cervix carcinoma</tissue>
    </source>
</reference>
<reference key="18">
    <citation type="journal article" date="2011" name="Sci. Signal.">
        <title>System-wide temporal characterization of the proteome and phosphoproteome of human embryonic stem cell differentiation.</title>
        <authorList>
            <person name="Rigbolt K.T."/>
            <person name="Prokhorova T.A."/>
            <person name="Akimov V."/>
            <person name="Henningsen J."/>
            <person name="Johansen P.T."/>
            <person name="Kratchmarova I."/>
            <person name="Kassem M."/>
            <person name="Mann M."/>
            <person name="Olsen J.V."/>
            <person name="Blagoev B."/>
        </authorList>
    </citation>
    <scope>PHOSPHORYLATION [LARGE SCALE ANALYSIS] AT SER-544; SER-545 AND SER-563</scope>
    <scope>VARIANT [LARGE SCALE ANALYSIS] THR-556</scope>
    <scope>IDENTIFICATION BY MASS SPECTROMETRY [LARGE SCALE ANALYSIS]</scope>
</reference>
<reference key="19">
    <citation type="journal article" date="2012" name="Mol. Cell. Proteomics">
        <title>Comparative large-scale characterisation of plant vs. mammal proteins reveals similar and idiosyncratic N-alpha acetylation features.</title>
        <authorList>
            <person name="Bienvenut W.V."/>
            <person name="Sumpton D."/>
            <person name="Martinez A."/>
            <person name="Lilla S."/>
            <person name="Espagne C."/>
            <person name="Meinnel T."/>
            <person name="Giglione C."/>
        </authorList>
    </citation>
    <scope>ACETYLATION [LARGE SCALE ANALYSIS] AT ALA-2 (ISOFORM BETA)</scope>
    <scope>CLEAVAGE OF INITIATOR METHIONINE [LARGE SCALE ANALYSIS] (ISOFORM BETA)</scope>
    <scope>IDENTIFICATION BY MASS SPECTROMETRY [LARGE SCALE ANALYSIS]</scope>
</reference>
<reference key="20">
    <citation type="journal article" date="2012" name="Proc. Natl. Acad. Sci. U.S.A.">
        <title>N-terminal acetylome analyses and functional insights of the N-terminal acetyltransferase NatB.</title>
        <authorList>
            <person name="Van Damme P."/>
            <person name="Lasa M."/>
            <person name="Polevoda B."/>
            <person name="Gazquez C."/>
            <person name="Elosegui-Artola A."/>
            <person name="Kim D.S."/>
            <person name="De Juan-Pardo E."/>
            <person name="Demeyer K."/>
            <person name="Hole K."/>
            <person name="Larrea E."/>
            <person name="Timmerman E."/>
            <person name="Prieto J."/>
            <person name="Arnesen T."/>
            <person name="Sherman F."/>
            <person name="Gevaert K."/>
            <person name="Aldabe R."/>
        </authorList>
    </citation>
    <scope>ACETYLATION [LARGE SCALE ANALYSIS] AT ALA-2 (ISOFORM BETA)</scope>
    <scope>CLEAVAGE OF INITIATOR METHIONINE [LARGE SCALE ANALYSIS] (ISOFORM BETA)</scope>
    <scope>IDENTIFICATION BY MASS SPECTROMETRY [LARGE SCALE ANALYSIS]</scope>
</reference>
<reference key="21">
    <citation type="journal article" date="2013" name="J. Proteome Res.">
        <title>Toward a comprehensive characterization of a human cancer cell phosphoproteome.</title>
        <authorList>
            <person name="Zhou H."/>
            <person name="Di Palma S."/>
            <person name="Preisinger C."/>
            <person name="Peng M."/>
            <person name="Polat A.N."/>
            <person name="Heck A.J."/>
            <person name="Mohammed S."/>
        </authorList>
    </citation>
    <scope>PHOSPHORYLATION [LARGE SCALE ANALYSIS] AT SER-348; SER-395; SER-530; SER-544; SER-545 AND SER-563</scope>
    <scope>VARIANT [LARGE SCALE ANALYSIS] THR-556</scope>
    <scope>IDENTIFICATION BY MASS SPECTROMETRY [LARGE SCALE ANALYSIS]</scope>
    <source>
        <tissue>Cervix carcinoma</tissue>
        <tissue>Erythroleukemia</tissue>
    </source>
</reference>
<reference key="22">
    <citation type="journal article" date="2014" name="J. Proteomics">
        <title>An enzyme assisted RP-RPLC approach for in-depth analysis of human liver phosphoproteome.</title>
        <authorList>
            <person name="Bian Y."/>
            <person name="Song C."/>
            <person name="Cheng K."/>
            <person name="Dong M."/>
            <person name="Wang F."/>
            <person name="Huang J."/>
            <person name="Sun D."/>
            <person name="Wang L."/>
            <person name="Ye M."/>
            <person name="Zou H."/>
        </authorList>
    </citation>
    <scope>PHOSPHORYLATION [LARGE SCALE ANALYSIS] AT SER-348; SER-530; SER-547 AND SER-551</scope>
    <scope>VARIANT [LARGE SCALE ANALYSIS] THR-556</scope>
    <scope>IDENTIFICATION BY MASS SPECTROMETRY [LARGE SCALE ANALYSIS]</scope>
    <source>
        <tissue>Liver</tissue>
    </source>
</reference>
<reference key="23">
    <citation type="submission" date="2006-10" db="PDB data bank">
        <title>Solution structure of SH3 domains of human vinexin.</title>
        <authorList>
            <consortium name="RIKEN structural genomics initiative (RSGI)"/>
        </authorList>
    </citation>
    <scope>STRUCTURE BY NMR OF 383-437 AND 615-671</scope>
</reference>
<reference key="24">
    <citation type="journal article" date="2008" name="J. Proteome Res.">
        <title>Combining protein-based IMAC, peptide-based IMAC, and MudPIT for efficient phosphoproteomic analysis.</title>
        <authorList>
            <person name="Cantin G.T."/>
            <person name="Yi W."/>
            <person name="Lu B."/>
            <person name="Park S.K."/>
            <person name="Xu T."/>
            <person name="Lee J.-D."/>
            <person name="Yates J.R. III"/>
        </authorList>
    </citation>
    <scope>VARIANT [LARGE SCALE ANALYSIS] THR-556</scope>
    <scope>IDENTIFICATION BY MASS SPECTROMETRY [LARGE SCALE ANALYSIS]</scope>
    <source>
        <tissue>Cervix carcinoma</tissue>
    </source>
</reference>
<reference key="25">
    <citation type="journal article" date="2008" name="Mol. Cell">
        <title>Kinase-selective enrichment enables quantitative phosphoproteomics of the kinome across the cell cycle.</title>
        <authorList>
            <person name="Daub H."/>
            <person name="Olsen J.V."/>
            <person name="Bairlein M."/>
            <person name="Gnad F."/>
            <person name="Oppermann F.S."/>
            <person name="Korner R."/>
            <person name="Greff Z."/>
            <person name="Keri G."/>
            <person name="Stemmann O."/>
            <person name="Mann M."/>
        </authorList>
    </citation>
    <scope>VARIANT [LARGE SCALE ANALYSIS] THR-556</scope>
    <scope>IDENTIFICATION BY MASS SPECTROMETRY [LARGE SCALE ANALYSIS]</scope>
    <source>
        <tissue>Cervix carcinoma</tissue>
    </source>
</reference>
<reference key="26">
    <citation type="journal article" date="2009" name="Anal. Chem.">
        <title>Lys-N and trypsin cover complementary parts of the phosphoproteome in a refined SCX-based approach.</title>
        <authorList>
            <person name="Gauci S."/>
            <person name="Helbig A.O."/>
            <person name="Slijper M."/>
            <person name="Krijgsveld J."/>
            <person name="Heck A.J."/>
            <person name="Mohammed S."/>
        </authorList>
    </citation>
    <scope>VARIANT [LARGE SCALE ANALYSIS] THR-556</scope>
    <scope>IDENTIFICATION BY MASS SPECTROMETRY [LARGE SCALE ANALYSIS]</scope>
</reference>
<name>VINEX_HUMAN</name>
<accession>O60504</accession>
<accession>Q5BJE4</accession>
<accession>Q6NX54</accession>
<accession>Q96FY4</accession>
<accession>Q9UQE4</accession>
<dbReference type="EMBL" id="AF064807">
    <property type="protein sequence ID" value="AAD32304.1"/>
    <property type="molecule type" value="mRNA"/>
</dbReference>
<dbReference type="EMBL" id="AF037261">
    <property type="protein sequence ID" value="AAC09244.1"/>
    <property type="molecule type" value="mRNA"/>
</dbReference>
<dbReference type="EMBL" id="AC037459">
    <property type="status" value="NOT_ANNOTATED_CDS"/>
    <property type="molecule type" value="Genomic_DNA"/>
</dbReference>
<dbReference type="EMBL" id="CH471080">
    <property type="protein sequence ID" value="EAW63675.1"/>
    <property type="molecule type" value="Genomic_DNA"/>
</dbReference>
<dbReference type="EMBL" id="BC067260">
    <property type="protein sequence ID" value="AAH67260.2"/>
    <property type="molecule type" value="mRNA"/>
</dbReference>
<dbReference type="EMBL" id="BC091514">
    <property type="protein sequence ID" value="AAH91514.1"/>
    <property type="molecule type" value="mRNA"/>
</dbReference>
<dbReference type="EMBL" id="BC010146">
    <property type="protein sequence ID" value="AAH10146.1"/>
    <property type="molecule type" value="mRNA"/>
</dbReference>
<dbReference type="CCDS" id="CCDS47824.1">
    <molecule id="O60504-2"/>
</dbReference>
<dbReference type="CCDS" id="CCDS6031.1">
    <molecule id="O60504-1"/>
</dbReference>
<dbReference type="RefSeq" id="NP_001018003.1">
    <molecule id="O60504-2"/>
    <property type="nucleotide sequence ID" value="NM_001018003.3"/>
</dbReference>
<dbReference type="RefSeq" id="NP_005766.3">
    <molecule id="O60504-1"/>
    <property type="nucleotide sequence ID" value="NM_005775.4"/>
</dbReference>
<dbReference type="RefSeq" id="XP_005273428.1">
    <property type="nucleotide sequence ID" value="XM_005273371.1"/>
</dbReference>
<dbReference type="RefSeq" id="XP_016868433.1">
    <property type="nucleotide sequence ID" value="XM_017012944.1"/>
</dbReference>
<dbReference type="RefSeq" id="XP_016868434.1">
    <molecule id="O60504-2"/>
    <property type="nucleotide sequence ID" value="XM_017012945.2"/>
</dbReference>
<dbReference type="RefSeq" id="XP_016868435.1">
    <molecule id="O60504-2"/>
    <property type="nucleotide sequence ID" value="XM_017012946.2"/>
</dbReference>
<dbReference type="RefSeq" id="XP_047277175.1">
    <molecule id="O60504-2"/>
    <property type="nucleotide sequence ID" value="XM_047421219.1"/>
</dbReference>
<dbReference type="PDB" id="2CT3">
    <property type="method" value="NMR"/>
    <property type="chains" value="A=615-671"/>
</dbReference>
<dbReference type="PDB" id="2DLM">
    <property type="method" value="NMR"/>
    <property type="chains" value="A=383-437"/>
</dbReference>
<dbReference type="PDB" id="2NWM">
    <property type="method" value="NMR"/>
    <property type="chains" value="A=383-438"/>
</dbReference>
<dbReference type="PDB" id="2YUP">
    <property type="method" value="NMR"/>
    <property type="chains" value="A=447-523"/>
</dbReference>
<dbReference type="PDBsum" id="2CT3"/>
<dbReference type="PDBsum" id="2DLM"/>
<dbReference type="PDBsum" id="2NWM"/>
<dbReference type="PDBsum" id="2YUP"/>
<dbReference type="SMR" id="O60504"/>
<dbReference type="BioGRID" id="115475">
    <property type="interactions" value="192"/>
</dbReference>
<dbReference type="CORUM" id="O60504"/>
<dbReference type="FunCoup" id="O60504">
    <property type="interactions" value="312"/>
</dbReference>
<dbReference type="IntAct" id="O60504">
    <property type="interactions" value="177"/>
</dbReference>
<dbReference type="MINT" id="O60504"/>
<dbReference type="STRING" id="9606.ENSP00000240123"/>
<dbReference type="GlyCosmos" id="O60504">
    <property type="glycosylation" value="1 site, 1 glycan"/>
</dbReference>
<dbReference type="GlyGen" id="O60504">
    <property type="glycosylation" value="1 site, 1 O-linked glycan (1 site)"/>
</dbReference>
<dbReference type="iPTMnet" id="O60504"/>
<dbReference type="MetOSite" id="O60504"/>
<dbReference type="PhosphoSitePlus" id="O60504"/>
<dbReference type="BioMuta" id="SORBS3"/>
<dbReference type="jPOST" id="O60504"/>
<dbReference type="MassIVE" id="O60504"/>
<dbReference type="PaxDb" id="9606-ENSP00000240123"/>
<dbReference type="PeptideAtlas" id="O60504"/>
<dbReference type="ProteomicsDB" id="49442">
    <molecule id="O60504-1"/>
</dbReference>
<dbReference type="ProteomicsDB" id="49443">
    <molecule id="O60504-2"/>
</dbReference>
<dbReference type="Pumba" id="O60504"/>
<dbReference type="Antibodypedia" id="2849">
    <property type="antibodies" value="77 antibodies from 17 providers"/>
</dbReference>
<dbReference type="DNASU" id="10174"/>
<dbReference type="Ensembl" id="ENST00000240123.12">
    <molecule id="O60504-1"/>
    <property type="protein sequence ID" value="ENSP00000240123.7"/>
    <property type="gene ID" value="ENSG00000120896.14"/>
</dbReference>
<dbReference type="Ensembl" id="ENST00000523965.5">
    <molecule id="O60504-2"/>
    <property type="protein sequence ID" value="ENSP00000429764.2"/>
    <property type="gene ID" value="ENSG00000120896.14"/>
</dbReference>
<dbReference type="GeneID" id="10174"/>
<dbReference type="KEGG" id="hsa:10174"/>
<dbReference type="MANE-Select" id="ENST00000240123.12">
    <property type="protein sequence ID" value="ENSP00000240123.7"/>
    <property type="RefSeq nucleotide sequence ID" value="NM_005775.5"/>
    <property type="RefSeq protein sequence ID" value="NP_005766.3"/>
</dbReference>
<dbReference type="UCSC" id="uc003xbv.4">
    <molecule id="O60504-1"/>
    <property type="organism name" value="human"/>
</dbReference>
<dbReference type="AGR" id="HGNC:30907"/>
<dbReference type="CTD" id="10174"/>
<dbReference type="DisGeNET" id="10174"/>
<dbReference type="GeneCards" id="SORBS3"/>
<dbReference type="HGNC" id="HGNC:30907">
    <property type="gene designation" value="SORBS3"/>
</dbReference>
<dbReference type="HPA" id="ENSG00000120896">
    <property type="expression patterns" value="Low tissue specificity"/>
</dbReference>
<dbReference type="MIM" id="610795">
    <property type="type" value="gene"/>
</dbReference>
<dbReference type="neXtProt" id="NX_O60504"/>
<dbReference type="OpenTargets" id="ENSG00000120896"/>
<dbReference type="PharmGKB" id="PA128394570"/>
<dbReference type="VEuPathDB" id="HostDB:ENSG00000120896"/>
<dbReference type="eggNOG" id="KOG4225">
    <property type="taxonomic scope" value="Eukaryota"/>
</dbReference>
<dbReference type="GeneTree" id="ENSGT00940000160558"/>
<dbReference type="HOGENOM" id="CLU_026296_0_0_1"/>
<dbReference type="InParanoid" id="O60504"/>
<dbReference type="OMA" id="TVCNGYL"/>
<dbReference type="OrthoDB" id="73680at2759"/>
<dbReference type="PAN-GO" id="O60504">
    <property type="GO annotations" value="4 GO annotations based on evolutionary models"/>
</dbReference>
<dbReference type="PhylomeDB" id="O60504"/>
<dbReference type="TreeFam" id="TF320680"/>
<dbReference type="PathwayCommons" id="O60504"/>
<dbReference type="Reactome" id="R-HSA-445355">
    <property type="pathway name" value="Smooth Muscle Contraction"/>
</dbReference>
<dbReference type="SignaLink" id="O60504"/>
<dbReference type="SIGNOR" id="O60504"/>
<dbReference type="BioGRID-ORCS" id="10174">
    <property type="hits" value="13 hits in 1161 CRISPR screens"/>
</dbReference>
<dbReference type="CD-CODE" id="DEE660B4">
    <property type="entry name" value="Stress granule"/>
</dbReference>
<dbReference type="ChiTaRS" id="SORBS3">
    <property type="organism name" value="human"/>
</dbReference>
<dbReference type="EvolutionaryTrace" id="O60504"/>
<dbReference type="GeneWiki" id="SORBS3"/>
<dbReference type="GenomeRNAi" id="10174"/>
<dbReference type="Pharos" id="O60504">
    <property type="development level" value="Tbio"/>
</dbReference>
<dbReference type="PRO" id="PR:O60504"/>
<dbReference type="Proteomes" id="UP000005640">
    <property type="component" value="Chromosome 8"/>
</dbReference>
<dbReference type="RNAct" id="O60504">
    <property type="molecule type" value="protein"/>
</dbReference>
<dbReference type="Bgee" id="ENSG00000120896">
    <property type="expression patterns" value="Expressed in right testis and 199 other cell types or tissues"/>
</dbReference>
<dbReference type="ExpressionAtlas" id="O60504">
    <property type="expression patterns" value="baseline and differential"/>
</dbReference>
<dbReference type="GO" id="GO:0030055">
    <property type="term" value="C:cell-substrate junction"/>
    <property type="evidence" value="ECO:0000318"/>
    <property type="project" value="GO_Central"/>
</dbReference>
<dbReference type="GO" id="GO:0005737">
    <property type="term" value="C:cytoplasm"/>
    <property type="evidence" value="ECO:0000318"/>
    <property type="project" value="GO_Central"/>
</dbReference>
<dbReference type="GO" id="GO:0005856">
    <property type="term" value="C:cytoskeleton"/>
    <property type="evidence" value="ECO:0007669"/>
    <property type="project" value="UniProtKB-SubCell"/>
</dbReference>
<dbReference type="GO" id="GO:0005829">
    <property type="term" value="C:cytosol"/>
    <property type="evidence" value="ECO:0000304"/>
    <property type="project" value="Reactome"/>
</dbReference>
<dbReference type="GO" id="GO:0005925">
    <property type="term" value="C:focal adhesion"/>
    <property type="evidence" value="ECO:0007005"/>
    <property type="project" value="UniProtKB"/>
</dbReference>
<dbReference type="GO" id="GO:0005634">
    <property type="term" value="C:nucleus"/>
    <property type="evidence" value="ECO:0000318"/>
    <property type="project" value="GO_Central"/>
</dbReference>
<dbReference type="GO" id="GO:0005200">
    <property type="term" value="F:structural constituent of cytoskeleton"/>
    <property type="evidence" value="ECO:0000304"/>
    <property type="project" value="ProtInc"/>
</dbReference>
<dbReference type="GO" id="GO:0017166">
    <property type="term" value="F:vinculin binding"/>
    <property type="evidence" value="ECO:0000353"/>
    <property type="project" value="UniProtKB"/>
</dbReference>
<dbReference type="GO" id="GO:0007155">
    <property type="term" value="P:cell adhesion"/>
    <property type="evidence" value="ECO:0000304"/>
    <property type="project" value="ProtInc"/>
</dbReference>
<dbReference type="GO" id="GO:0031589">
    <property type="term" value="P:cell-substrate adhesion"/>
    <property type="evidence" value="ECO:0000318"/>
    <property type="project" value="GO_Central"/>
</dbReference>
<dbReference type="GO" id="GO:0000165">
    <property type="term" value="P:MAPK cascade"/>
    <property type="evidence" value="ECO:0007669"/>
    <property type="project" value="Ensembl"/>
</dbReference>
<dbReference type="GO" id="GO:0000122">
    <property type="term" value="P:negative regulation of transcription by RNA polymerase II"/>
    <property type="evidence" value="ECO:0007669"/>
    <property type="project" value="Ensembl"/>
</dbReference>
<dbReference type="GO" id="GO:0051495">
    <property type="term" value="P:positive regulation of cytoskeleton organization"/>
    <property type="evidence" value="ECO:0000303"/>
    <property type="project" value="UniProtKB"/>
</dbReference>
<dbReference type="GO" id="GO:0043410">
    <property type="term" value="P:positive regulation of MAPK cascade"/>
    <property type="evidence" value="ECO:0007669"/>
    <property type="project" value="Ensembl"/>
</dbReference>
<dbReference type="GO" id="GO:0051496">
    <property type="term" value="P:positive regulation of stress fiber assembly"/>
    <property type="evidence" value="ECO:0000314"/>
    <property type="project" value="UniProtKB"/>
</dbReference>
<dbReference type="CDD" id="cd11921">
    <property type="entry name" value="SH3_Vinexin_1"/>
    <property type="match status" value="1"/>
</dbReference>
<dbReference type="CDD" id="cd11924">
    <property type="entry name" value="SH3_Vinexin_2"/>
    <property type="match status" value="1"/>
</dbReference>
<dbReference type="CDD" id="cd11918">
    <property type="entry name" value="SH3_Vinexin_3"/>
    <property type="match status" value="1"/>
</dbReference>
<dbReference type="FunFam" id="2.30.30.40:FF:000001">
    <property type="entry name" value="Sorbin and SH3 domain-containing protein 1 isoform 2"/>
    <property type="match status" value="1"/>
</dbReference>
<dbReference type="FunFam" id="2.30.30.40:FF:000140">
    <property type="entry name" value="vinexin isoform X2"/>
    <property type="match status" value="1"/>
</dbReference>
<dbReference type="Gene3D" id="2.30.30.40">
    <property type="entry name" value="SH3 Domains"/>
    <property type="match status" value="3"/>
</dbReference>
<dbReference type="InterPro" id="IPR050384">
    <property type="entry name" value="Endophilin_SH3RF"/>
</dbReference>
<dbReference type="InterPro" id="IPR036028">
    <property type="entry name" value="SH3-like_dom_sf"/>
</dbReference>
<dbReference type="InterPro" id="IPR001452">
    <property type="entry name" value="SH3_domain"/>
</dbReference>
<dbReference type="InterPro" id="IPR003127">
    <property type="entry name" value="SoHo_dom"/>
</dbReference>
<dbReference type="InterPro" id="IPR035609">
    <property type="entry name" value="Vinexin_SH3_1"/>
</dbReference>
<dbReference type="InterPro" id="IPR035608">
    <property type="entry name" value="Vinexin_SH3_2"/>
</dbReference>
<dbReference type="InterPro" id="IPR035607">
    <property type="entry name" value="Vinexin_SH3_3"/>
</dbReference>
<dbReference type="PANTHER" id="PTHR14167">
    <property type="entry name" value="SH3 DOMAIN-CONTAINING"/>
    <property type="match status" value="1"/>
</dbReference>
<dbReference type="PANTHER" id="PTHR14167:SF54">
    <property type="entry name" value="VINEXIN"/>
    <property type="match status" value="1"/>
</dbReference>
<dbReference type="Pfam" id="PF00018">
    <property type="entry name" value="SH3_1"/>
    <property type="match status" value="1"/>
</dbReference>
<dbReference type="Pfam" id="PF14604">
    <property type="entry name" value="SH3_9"/>
    <property type="match status" value="2"/>
</dbReference>
<dbReference type="Pfam" id="PF02208">
    <property type="entry name" value="Sorb"/>
    <property type="match status" value="1"/>
</dbReference>
<dbReference type="PRINTS" id="PR00499">
    <property type="entry name" value="P67PHOX"/>
</dbReference>
<dbReference type="PRINTS" id="PR00452">
    <property type="entry name" value="SH3DOMAIN"/>
</dbReference>
<dbReference type="SMART" id="SM00326">
    <property type="entry name" value="SH3"/>
    <property type="match status" value="3"/>
</dbReference>
<dbReference type="SMART" id="SM00459">
    <property type="entry name" value="Sorb"/>
    <property type="match status" value="1"/>
</dbReference>
<dbReference type="SUPFAM" id="SSF50044">
    <property type="entry name" value="SH3-domain"/>
    <property type="match status" value="3"/>
</dbReference>
<dbReference type="PROSITE" id="PS50002">
    <property type="entry name" value="SH3"/>
    <property type="match status" value="3"/>
</dbReference>
<dbReference type="PROSITE" id="PS50831">
    <property type="entry name" value="SOHO"/>
    <property type="match status" value="1"/>
</dbReference>
<proteinExistence type="evidence at protein level"/>
<evidence type="ECO:0000250" key="1"/>
<evidence type="ECO:0000255" key="2">
    <source>
        <dbReference type="PROSITE-ProRule" id="PRU00192"/>
    </source>
</evidence>
<evidence type="ECO:0000255" key="3">
    <source>
        <dbReference type="PROSITE-ProRule" id="PRU00195"/>
    </source>
</evidence>
<evidence type="ECO:0000256" key="4">
    <source>
        <dbReference type="SAM" id="MobiDB-lite"/>
    </source>
</evidence>
<evidence type="ECO:0000269" key="5">
    <source>
    </source>
</evidence>
<evidence type="ECO:0000269" key="6">
    <source>
    </source>
</evidence>
<evidence type="ECO:0000269" key="7">
    <source>
    </source>
</evidence>
<evidence type="ECO:0000269" key="8">
    <source ref="2"/>
</evidence>
<evidence type="ECO:0000303" key="9">
    <source>
    </source>
</evidence>
<evidence type="ECO:0000303" key="10">
    <source>
    </source>
</evidence>
<evidence type="ECO:0000305" key="11"/>
<evidence type="ECO:0007744" key="12">
    <source>
    </source>
</evidence>
<evidence type="ECO:0007744" key="13">
    <source>
    </source>
</evidence>
<evidence type="ECO:0007744" key="14">
    <source>
    </source>
</evidence>
<evidence type="ECO:0007744" key="15">
    <source>
    </source>
</evidence>
<evidence type="ECO:0007744" key="16">
    <source>
    </source>
</evidence>
<evidence type="ECO:0007744" key="17">
    <source>
    </source>
</evidence>
<evidence type="ECO:0007744" key="18">
    <source>
    </source>
</evidence>
<evidence type="ECO:0007744" key="19">
    <source>
    </source>
</evidence>
<evidence type="ECO:0007744" key="20">
    <source>
    </source>
</evidence>
<evidence type="ECO:0007744" key="21">
    <source>
    </source>
</evidence>
<evidence type="ECO:0007744" key="22">
    <source>
    </source>
</evidence>
<evidence type="ECO:0007744" key="23">
    <source>
    </source>
</evidence>
<evidence type="ECO:0007744" key="24">
    <source>
    </source>
</evidence>
<evidence type="ECO:0007829" key="25">
    <source>
        <dbReference type="PDB" id="2CT3"/>
    </source>
</evidence>
<evidence type="ECO:0007829" key="26">
    <source>
        <dbReference type="PDB" id="2DLM"/>
    </source>
</evidence>
<evidence type="ECO:0007829" key="27">
    <source>
        <dbReference type="PDB" id="2YUP"/>
    </source>
</evidence>
<feature type="chain" id="PRO_0000065830" description="Vinexin">
    <location>
        <begin position="1"/>
        <end position="671"/>
    </location>
</feature>
<feature type="domain" description="SoHo" evidence="3">
    <location>
        <begin position="115"/>
        <end position="187"/>
    </location>
</feature>
<feature type="domain" description="SH3 1" evidence="2">
    <location>
        <begin position="380"/>
        <end position="439"/>
    </location>
</feature>
<feature type="domain" description="SH3 2" evidence="2">
    <location>
        <begin position="454"/>
        <end position="515"/>
    </location>
</feature>
<feature type="domain" description="SH3 3" evidence="2">
    <location>
        <begin position="612"/>
        <end position="671"/>
    </location>
</feature>
<feature type="region of interest" description="Disordered" evidence="4">
    <location>
        <begin position="46"/>
        <end position="111"/>
    </location>
</feature>
<feature type="region of interest" description="Disordered" evidence="4">
    <location>
        <begin position="166"/>
        <end position="215"/>
    </location>
</feature>
<feature type="region of interest" description="Disordered" evidence="4">
    <location>
        <begin position="249"/>
        <end position="268"/>
    </location>
</feature>
<feature type="region of interest" description="Disordered" evidence="4">
    <location>
        <begin position="295"/>
        <end position="324"/>
    </location>
</feature>
<feature type="region of interest" description="Disordered" evidence="4">
    <location>
        <begin position="337"/>
        <end position="383"/>
    </location>
</feature>
<feature type="region of interest" description="Binds to vinculin">
    <location>
        <begin position="380"/>
        <end position="515"/>
    </location>
</feature>
<feature type="region of interest" description="Disordered" evidence="4">
    <location>
        <begin position="519"/>
        <end position="611"/>
    </location>
</feature>
<feature type="region of interest" description="Binds to SOS">
    <location>
        <begin position="612"/>
        <end position="671"/>
    </location>
</feature>
<feature type="compositionally biased region" description="Polar residues" evidence="4">
    <location>
        <begin position="88"/>
        <end position="108"/>
    </location>
</feature>
<feature type="compositionally biased region" description="Polar residues" evidence="4">
    <location>
        <begin position="359"/>
        <end position="368"/>
    </location>
</feature>
<feature type="compositionally biased region" description="Low complexity" evidence="4">
    <location>
        <begin position="535"/>
        <end position="553"/>
    </location>
</feature>
<feature type="compositionally biased region" description="Polar residues" evidence="4">
    <location>
        <begin position="560"/>
        <end position="584"/>
    </location>
</feature>
<feature type="modified residue" description="Phosphoserine" evidence="23 24">
    <location>
        <position position="348"/>
    </location>
</feature>
<feature type="modified residue" description="Phosphoserine" evidence="19 23">
    <location>
        <position position="395"/>
    </location>
</feature>
<feature type="modified residue" description="Phosphoserine; by MAPK1" evidence="12 14 18 19 23 24">
    <location>
        <position position="530"/>
    </location>
</feature>
<feature type="modified residue" description="Phosphoserine" evidence="20 23">
    <location>
        <position position="544"/>
    </location>
</feature>
<feature type="modified residue" description="Phosphoserine" evidence="19 20 23">
    <location>
        <position position="545"/>
    </location>
</feature>
<feature type="modified residue" description="Phosphoserine" evidence="24">
    <location>
        <position position="547"/>
    </location>
</feature>
<feature type="modified residue" description="Phosphoserine" evidence="14 19 24">
    <location>
        <position position="551"/>
    </location>
</feature>
<feature type="modified residue" description="Phosphoserine" evidence="14 18 19 20 23">
    <location>
        <position position="563"/>
    </location>
</feature>
<feature type="splice variant" id="VSP_004489" description="In isoform Beta." evidence="9 10">
    <location>
        <begin position="1"/>
        <end position="342"/>
    </location>
</feature>
<feature type="sequence variant" id="VAR_057019" description="In dbSNP:rs3758036.">
    <original>P</original>
    <variation>L</variation>
    <location>
        <position position="255"/>
    </location>
</feature>
<feature type="sequence variant" id="VAR_055019" description="In dbSNP:rs2449331." evidence="5 6 7 8 13 14 15 16 17 18 19 20 23 24">
    <original>I</original>
    <variation>T</variation>
    <location>
        <position position="556"/>
    </location>
</feature>
<feature type="sequence variant" id="VAR_055020" description="In dbSNP:rs1047030.">
    <original>T</original>
    <variation>A</variation>
    <location>
        <position position="573"/>
    </location>
</feature>
<feature type="mutagenesis site" description="Loss of SOS-binding ability." evidence="7">
    <original>W</original>
    <variation>F</variation>
    <location>
        <position position="649"/>
    </location>
</feature>
<feature type="mutagenesis site" description="Loss of SOS-binding ability." evidence="7">
    <original>Y</original>
    <variation>V</variation>
    <location>
        <position position="667"/>
    </location>
</feature>
<feature type="sequence conflict" description="In Ref. 1; AAD32304." evidence="11" ref="1">
    <original>L</original>
    <variation>F</variation>
    <location>
        <position position="583"/>
    </location>
</feature>
<feature type="strand" evidence="26">
    <location>
        <begin position="385"/>
        <end position="389"/>
    </location>
</feature>
<feature type="strand" evidence="26">
    <location>
        <begin position="395"/>
        <end position="398"/>
    </location>
</feature>
<feature type="strand" evidence="26">
    <location>
        <begin position="406"/>
        <end position="414"/>
    </location>
</feature>
<feature type="strand" evidence="26">
    <location>
        <begin position="417"/>
        <end position="422"/>
    </location>
</feature>
<feature type="strand" evidence="26">
    <location>
        <begin position="425"/>
        <end position="435"/>
    </location>
</feature>
<feature type="helix" evidence="27">
    <location>
        <begin position="453"/>
        <end position="455"/>
    </location>
</feature>
<feature type="strand" evidence="27">
    <location>
        <begin position="456"/>
        <end position="461"/>
    </location>
</feature>
<feature type="strand" evidence="27">
    <location>
        <begin position="469"/>
        <end position="472"/>
    </location>
</feature>
<feature type="strand" evidence="27">
    <location>
        <begin position="480"/>
        <end position="485"/>
    </location>
</feature>
<feature type="strand" evidence="27">
    <location>
        <begin position="489"/>
        <end position="495"/>
    </location>
</feature>
<feature type="turn" evidence="27">
    <location>
        <begin position="497"/>
        <end position="499"/>
    </location>
</feature>
<feature type="strand" evidence="27">
    <location>
        <begin position="502"/>
        <end position="506"/>
    </location>
</feature>
<feature type="helix" evidence="27">
    <location>
        <begin position="507"/>
        <end position="509"/>
    </location>
</feature>
<feature type="strand" evidence="27">
    <location>
        <begin position="510"/>
        <end position="514"/>
    </location>
</feature>
<feature type="strand" evidence="25">
    <location>
        <begin position="615"/>
        <end position="621"/>
    </location>
</feature>
<feature type="strand" evidence="25">
    <location>
        <begin position="637"/>
        <end position="644"/>
    </location>
</feature>
<feature type="strand" evidence="25">
    <location>
        <begin position="646"/>
        <end position="648"/>
    </location>
</feature>
<feature type="strand" evidence="25">
    <location>
        <begin position="650"/>
        <end position="657"/>
    </location>
</feature>
<feature type="strand" evidence="25">
    <location>
        <begin position="660"/>
        <end position="663"/>
    </location>
</feature>
<feature type="turn" evidence="25">
    <location>
        <begin position="665"/>
        <end position="667"/>
    </location>
</feature>
<feature type="strand" evidence="25">
    <location>
        <begin position="668"/>
        <end position="670"/>
    </location>
</feature>
<feature type="initiator methionine" description="Removed" evidence="16 19 21 22">
    <location sequence="O60504-2">
        <position position="1"/>
    </location>
</feature>
<feature type="modified residue" description="N-acetylalanine" evidence="16 19 21 22">
    <location sequence="O60504-2">
        <position position="2"/>
    </location>
</feature>
<feature type="modified residue" description="Phosphoserine" evidence="16 19">
    <location sequence="O60504-2">
        <position position="6"/>
    </location>
</feature>